<proteinExistence type="inferred from homology"/>
<name>NB2_MYCPA</name>
<protein>
    <recommendedName>
        <fullName>Peroxynitrite isomerase 2</fullName>
        <ecNumber evidence="1">5.99.-.-</ecNumber>
    </recommendedName>
    <alternativeName>
        <fullName>Ferric nitrobindin</fullName>
        <shortName>Nb(III)</shortName>
    </alternativeName>
</protein>
<evidence type="ECO:0000255" key="1">
    <source>
        <dbReference type="HAMAP-Rule" id="MF_01297"/>
    </source>
</evidence>
<keyword id="KW-0349">Heme</keyword>
<keyword id="KW-0408">Iron</keyword>
<keyword id="KW-0413">Isomerase</keyword>
<keyword id="KW-0479">Metal-binding</keyword>
<keyword id="KW-1185">Reference proteome</keyword>
<comment type="function">
    <text evidence="1">Heme-binding protein able to scavenge peroxynitrite and to protect free L-tyrosine against peroxynitrite-mediated nitration, by acting as a peroxynitrite isomerase that converts peroxynitrite to nitrate. Therefore, this protein likely plays a role in peroxynitrite sensing and in the detoxification of reactive nitrogen and oxygen species (RNS and ROS, respectively). Is able to bind nitric oxide (NO) in vitro, but may act as a sensor of peroxynitrite levels in vivo.</text>
</comment>
<comment type="catalytic activity">
    <reaction evidence="1">
        <text>peroxynitrite = nitrate</text>
        <dbReference type="Rhea" id="RHEA:63116"/>
        <dbReference type="ChEBI" id="CHEBI:17632"/>
        <dbReference type="ChEBI" id="CHEBI:25941"/>
    </reaction>
    <physiologicalReaction direction="left-to-right" evidence="1">
        <dbReference type="Rhea" id="RHEA:63117"/>
    </physiologicalReaction>
</comment>
<comment type="cofactor">
    <cofactor evidence="1">
        <name>heme b</name>
        <dbReference type="ChEBI" id="CHEBI:60344"/>
    </cofactor>
    <text evidence="1">Binds 1 heme b group per subunit, that coordinates a highly solvent-exposed Fe(III) atom.</text>
</comment>
<comment type="pathway">
    <text evidence="1">Nitrogen metabolism.</text>
</comment>
<comment type="subunit">
    <text evidence="1">Homodimer.</text>
</comment>
<comment type="domain">
    <text evidence="1">Forms a 10-stranded antiparallel beta-barrel structure able to accommodate a hydrophobic ligand in its interior. In fact, this fold hosts the heme group, which is located in a wide surface cleft.</text>
</comment>
<comment type="similarity">
    <text evidence="1">Belongs to the nitrobindin family.</text>
</comment>
<feature type="chain" id="PRO_0000356925" description="Peroxynitrite isomerase 2">
    <location>
        <begin position="1"/>
        <end position="235"/>
    </location>
</feature>
<feature type="short sequence motif" description="GXWXGXG" evidence="1">
    <location>
        <begin position="82"/>
        <end position="88"/>
    </location>
</feature>
<feature type="binding site" evidence="1">
    <location>
        <position position="198"/>
    </location>
    <ligand>
        <name>heme b</name>
        <dbReference type="ChEBI" id="CHEBI:60344"/>
    </ligand>
</feature>
<feature type="binding site" description="axial binding residue" evidence="1">
    <location>
        <position position="225"/>
    </location>
    <ligand>
        <name>heme b</name>
        <dbReference type="ChEBI" id="CHEBI:60344"/>
    </ligand>
    <ligandPart>
        <name>Fe</name>
        <dbReference type="ChEBI" id="CHEBI:18248"/>
    </ligandPart>
</feature>
<reference key="1">
    <citation type="journal article" date="2005" name="Proc. Natl. Acad. Sci. U.S.A.">
        <title>The complete genome sequence of Mycobacterium avium subspecies paratuberculosis.</title>
        <authorList>
            <person name="Li L."/>
            <person name="Bannantine J.P."/>
            <person name="Zhang Q."/>
            <person name="Amonsin A."/>
            <person name="May B.J."/>
            <person name="Alt D."/>
            <person name="Banerji N."/>
            <person name="Kanjilal S."/>
            <person name="Kapur V."/>
        </authorList>
    </citation>
    <scope>NUCLEOTIDE SEQUENCE [LARGE SCALE GENOMIC DNA]</scope>
    <source>
        <strain>ATCC BAA-968 / K-10</strain>
    </source>
</reference>
<accession>Q743E2</accession>
<sequence>MVCALHAVPAHHRRVVTPAGDDPSGPAGSGDRAVAAAAERAKLTAGRNIPSFDDLPLPADTANLREGANLSDALLALLPLVGVWRGEGEGRGHDGDYRFGQQIVVSHDGGDYLNWEARSWRLNDTGDYQERGLRETGFWRFVRDPDDPSESQAIELLLAHSAGYVELFYGRPRTQSSWELVTDALARSRSGVLVGGAKRLYGIVEGGDLAYVEERVDADGGLVPHLSARLSRFAG</sequence>
<organism>
    <name type="scientific">Mycolicibacterium paratuberculosis (strain ATCC BAA-968 / K-10)</name>
    <name type="common">Mycobacterium paratuberculosis</name>
    <dbReference type="NCBI Taxonomy" id="262316"/>
    <lineage>
        <taxon>Bacteria</taxon>
        <taxon>Bacillati</taxon>
        <taxon>Actinomycetota</taxon>
        <taxon>Actinomycetes</taxon>
        <taxon>Mycobacteriales</taxon>
        <taxon>Mycobacteriaceae</taxon>
        <taxon>Mycobacterium</taxon>
        <taxon>Mycobacterium avium complex (MAC)</taxon>
    </lineage>
</organism>
<dbReference type="EC" id="5.99.-.-" evidence="1"/>
<dbReference type="EMBL" id="AE016958">
    <property type="protein sequence ID" value="AAS02960.1"/>
    <property type="molecule type" value="Genomic_DNA"/>
</dbReference>
<dbReference type="SMR" id="Q743E2"/>
<dbReference type="STRING" id="262316.MAP_0643c"/>
<dbReference type="KEGG" id="mpa:MAP_0643c"/>
<dbReference type="eggNOG" id="COG4044">
    <property type="taxonomic scope" value="Bacteria"/>
</dbReference>
<dbReference type="HOGENOM" id="CLU_085483_0_0_11"/>
<dbReference type="Proteomes" id="UP000000580">
    <property type="component" value="Chromosome"/>
</dbReference>
<dbReference type="GO" id="GO:0020037">
    <property type="term" value="F:heme binding"/>
    <property type="evidence" value="ECO:0007669"/>
    <property type="project" value="UniProtKB-UniRule"/>
</dbReference>
<dbReference type="GO" id="GO:0046872">
    <property type="term" value="F:metal ion binding"/>
    <property type="evidence" value="ECO:0007669"/>
    <property type="project" value="UniProtKB-KW"/>
</dbReference>
<dbReference type="GO" id="GO:0062213">
    <property type="term" value="F:peroxynitrite isomerase activity"/>
    <property type="evidence" value="ECO:0007669"/>
    <property type="project" value="UniProtKB-UniRule"/>
</dbReference>
<dbReference type="CDD" id="cd07828">
    <property type="entry name" value="lipocalin_heme-bd-THAP4-like"/>
    <property type="match status" value="1"/>
</dbReference>
<dbReference type="Gene3D" id="2.40.128.20">
    <property type="match status" value="1"/>
</dbReference>
<dbReference type="HAMAP" id="MF_01297">
    <property type="entry name" value="nitrobindin"/>
    <property type="match status" value="1"/>
</dbReference>
<dbReference type="InterPro" id="IPR012674">
    <property type="entry name" value="Calycin"/>
</dbReference>
<dbReference type="InterPro" id="IPR022939">
    <property type="entry name" value="Nb(III)_bact/plant"/>
</dbReference>
<dbReference type="InterPro" id="IPR045165">
    <property type="entry name" value="Nitrobindin"/>
</dbReference>
<dbReference type="InterPro" id="IPR014878">
    <property type="entry name" value="THAP4-like_heme-bd"/>
</dbReference>
<dbReference type="PANTHER" id="PTHR15854:SF4">
    <property type="entry name" value="PEROXYNITRITE ISOMERASE THAP4"/>
    <property type="match status" value="1"/>
</dbReference>
<dbReference type="PANTHER" id="PTHR15854">
    <property type="entry name" value="THAP4 PROTEIN"/>
    <property type="match status" value="1"/>
</dbReference>
<dbReference type="Pfam" id="PF08768">
    <property type="entry name" value="THAP4_heme-bd"/>
    <property type="match status" value="1"/>
</dbReference>
<dbReference type="SUPFAM" id="SSF50814">
    <property type="entry name" value="Lipocalins"/>
    <property type="match status" value="1"/>
</dbReference>
<gene>
    <name type="ordered locus">MAP_0643c</name>
</gene>